<accession>O34723</accession>
<accession>Q796C7</accession>
<keyword id="KW-0002">3D-structure</keyword>
<keyword id="KW-0963">Cytoplasm</keyword>
<keyword id="KW-0238">DNA-binding</keyword>
<keyword id="KW-0597">Phosphoprotein</keyword>
<keyword id="KW-1185">Reference proteome</keyword>
<keyword id="KW-0804">Transcription</keyword>
<keyword id="KW-0805">Transcription regulation</keyword>
<keyword id="KW-0902">Two-component regulatory system</keyword>
<dbReference type="EMBL" id="AF027868">
    <property type="protein sequence ID" value="AAB84438.1"/>
    <property type="molecule type" value="Genomic_DNA"/>
</dbReference>
<dbReference type="EMBL" id="AL009126">
    <property type="protein sequence ID" value="CAB13812.1"/>
    <property type="molecule type" value="Genomic_DNA"/>
</dbReference>
<dbReference type="PIR" id="D69901">
    <property type="entry name" value="D69901"/>
</dbReference>
<dbReference type="RefSeq" id="NP_389801.1">
    <property type="nucleotide sequence ID" value="NC_000964.3"/>
</dbReference>
<dbReference type="RefSeq" id="WP_004399356.1">
    <property type="nucleotide sequence ID" value="NZ_OZ025638.1"/>
</dbReference>
<dbReference type="PDB" id="4LDZ">
    <property type="method" value="X-ray"/>
    <property type="resolution" value="2.31 A"/>
    <property type="chains" value="A/B=1-199"/>
</dbReference>
<dbReference type="PDB" id="4LE0">
    <property type="method" value="X-ray"/>
    <property type="resolution" value="2.27 A"/>
    <property type="chains" value="A/B=1-135"/>
</dbReference>
<dbReference type="PDB" id="4LE1">
    <property type="method" value="X-ray"/>
    <property type="resolution" value="1.95 A"/>
    <property type="chains" value="A/B=1-135"/>
</dbReference>
<dbReference type="PDB" id="4LE2">
    <property type="method" value="X-ray"/>
    <property type="resolution" value="2.54 A"/>
    <property type="chains" value="A/B/C/D=1-135"/>
</dbReference>
<dbReference type="PDB" id="5IUJ">
    <property type="method" value="X-ray"/>
    <property type="resolution" value="3.20 A"/>
    <property type="chains" value="C/F=1-135"/>
</dbReference>
<dbReference type="PDB" id="5IUK">
    <property type="method" value="X-ray"/>
    <property type="resolution" value="2.90 A"/>
    <property type="chains" value="C/F=1-135"/>
</dbReference>
<dbReference type="PDB" id="5IUL">
    <property type="method" value="X-ray"/>
    <property type="resolution" value="3.15 A"/>
    <property type="chains" value="C/F=1-135"/>
</dbReference>
<dbReference type="PDB" id="7SSI">
    <property type="method" value="X-ray"/>
    <property type="resolution" value="3.41 A"/>
    <property type="chains" value="C/F=1-135"/>
</dbReference>
<dbReference type="PDB" id="7SSJ">
    <property type="method" value="X-ray"/>
    <property type="resolution" value="2.52 A"/>
    <property type="chains" value="B/E/F=1-135"/>
</dbReference>
<dbReference type="PDBsum" id="4LDZ"/>
<dbReference type="PDBsum" id="4LE0"/>
<dbReference type="PDBsum" id="4LE1"/>
<dbReference type="PDBsum" id="4LE2"/>
<dbReference type="PDBsum" id="5IUJ"/>
<dbReference type="PDBsum" id="5IUK"/>
<dbReference type="PDBsum" id="5IUL"/>
<dbReference type="PDBsum" id="7SSI"/>
<dbReference type="PDBsum" id="7SSJ"/>
<dbReference type="SMR" id="O34723"/>
<dbReference type="DIP" id="DIP-48967N"/>
<dbReference type="FunCoup" id="O34723">
    <property type="interactions" value="127"/>
</dbReference>
<dbReference type="IntAct" id="O34723">
    <property type="interactions" value="1"/>
</dbReference>
<dbReference type="STRING" id="224308.BSU19200"/>
<dbReference type="PaxDb" id="224308-BSU19200"/>
<dbReference type="EnsemblBacteria" id="CAB13812">
    <property type="protein sequence ID" value="CAB13812"/>
    <property type="gene ID" value="BSU_19200"/>
</dbReference>
<dbReference type="GeneID" id="939664"/>
<dbReference type="KEGG" id="bsu:BSU19200"/>
<dbReference type="PATRIC" id="fig|224308.179.peg.2098"/>
<dbReference type="eggNOG" id="COG2197">
    <property type="taxonomic scope" value="Bacteria"/>
</dbReference>
<dbReference type="InParanoid" id="O34723"/>
<dbReference type="OrthoDB" id="9780153at2"/>
<dbReference type="PhylomeDB" id="O34723"/>
<dbReference type="BioCyc" id="BSUB:BSU19200-MONOMER"/>
<dbReference type="EvolutionaryTrace" id="O34723"/>
<dbReference type="Proteomes" id="UP000001570">
    <property type="component" value="Chromosome"/>
</dbReference>
<dbReference type="GO" id="GO:0005737">
    <property type="term" value="C:cytoplasm"/>
    <property type="evidence" value="ECO:0007669"/>
    <property type="project" value="UniProtKB-SubCell"/>
</dbReference>
<dbReference type="GO" id="GO:0003677">
    <property type="term" value="F:DNA binding"/>
    <property type="evidence" value="ECO:0007669"/>
    <property type="project" value="UniProtKB-KW"/>
</dbReference>
<dbReference type="GO" id="GO:0000160">
    <property type="term" value="P:phosphorelay signal transduction system"/>
    <property type="evidence" value="ECO:0007669"/>
    <property type="project" value="UniProtKB-KW"/>
</dbReference>
<dbReference type="GO" id="GO:0006355">
    <property type="term" value="P:regulation of DNA-templated transcription"/>
    <property type="evidence" value="ECO:0007669"/>
    <property type="project" value="InterPro"/>
</dbReference>
<dbReference type="CDD" id="cd06170">
    <property type="entry name" value="LuxR_C_like"/>
    <property type="match status" value="1"/>
</dbReference>
<dbReference type="CDD" id="cd19930">
    <property type="entry name" value="REC_DesR-like"/>
    <property type="match status" value="1"/>
</dbReference>
<dbReference type="Gene3D" id="3.40.50.2300">
    <property type="match status" value="1"/>
</dbReference>
<dbReference type="Gene3D" id="1.10.10.10">
    <property type="entry name" value="Winged helix-like DNA-binding domain superfamily/Winged helix DNA-binding domain"/>
    <property type="match status" value="1"/>
</dbReference>
<dbReference type="InterPro" id="IPR011006">
    <property type="entry name" value="CheY-like_superfamily"/>
</dbReference>
<dbReference type="InterPro" id="IPR016032">
    <property type="entry name" value="Sig_transdc_resp-reg_C-effctor"/>
</dbReference>
<dbReference type="InterPro" id="IPR001789">
    <property type="entry name" value="Sig_transdc_resp-reg_receiver"/>
</dbReference>
<dbReference type="InterPro" id="IPR000792">
    <property type="entry name" value="Tscrpt_reg_LuxR_C"/>
</dbReference>
<dbReference type="InterPro" id="IPR039420">
    <property type="entry name" value="WalR-like"/>
</dbReference>
<dbReference type="InterPro" id="IPR036388">
    <property type="entry name" value="WH-like_DNA-bd_sf"/>
</dbReference>
<dbReference type="PANTHER" id="PTHR43214:SF42">
    <property type="entry name" value="TRANSCRIPTIONAL REGULATORY PROTEIN DESR"/>
    <property type="match status" value="1"/>
</dbReference>
<dbReference type="PANTHER" id="PTHR43214">
    <property type="entry name" value="TWO-COMPONENT RESPONSE REGULATOR"/>
    <property type="match status" value="1"/>
</dbReference>
<dbReference type="Pfam" id="PF00196">
    <property type="entry name" value="GerE"/>
    <property type="match status" value="1"/>
</dbReference>
<dbReference type="Pfam" id="PF00072">
    <property type="entry name" value="Response_reg"/>
    <property type="match status" value="1"/>
</dbReference>
<dbReference type="PRINTS" id="PR00038">
    <property type="entry name" value="HTHLUXR"/>
</dbReference>
<dbReference type="SMART" id="SM00421">
    <property type="entry name" value="HTH_LUXR"/>
    <property type="match status" value="1"/>
</dbReference>
<dbReference type="SMART" id="SM00448">
    <property type="entry name" value="REC"/>
    <property type="match status" value="1"/>
</dbReference>
<dbReference type="SUPFAM" id="SSF46894">
    <property type="entry name" value="C-terminal effector domain of the bipartite response regulators"/>
    <property type="match status" value="1"/>
</dbReference>
<dbReference type="SUPFAM" id="SSF52172">
    <property type="entry name" value="CheY-like"/>
    <property type="match status" value="1"/>
</dbReference>
<dbReference type="PROSITE" id="PS50043">
    <property type="entry name" value="HTH_LUXR_2"/>
    <property type="match status" value="1"/>
</dbReference>
<dbReference type="PROSITE" id="PS50110">
    <property type="entry name" value="RESPONSE_REGULATORY"/>
    <property type="match status" value="1"/>
</dbReference>
<proteinExistence type="evidence at protein level"/>
<feature type="chain" id="PRO_0000360772" description="Transcriptional regulatory protein DesR">
    <location>
        <begin position="1"/>
        <end position="199"/>
    </location>
</feature>
<feature type="domain" description="Response regulatory" evidence="2">
    <location>
        <begin position="3"/>
        <end position="117"/>
    </location>
</feature>
<feature type="domain" description="HTH luxR-type" evidence="3">
    <location>
        <begin position="131"/>
        <end position="196"/>
    </location>
</feature>
<feature type="DNA-binding region" description="H-T-H motif" evidence="3">
    <location>
        <begin position="155"/>
        <end position="174"/>
    </location>
</feature>
<feature type="modified residue" description="4-aspartylphosphate" evidence="2">
    <location>
        <position position="54"/>
    </location>
</feature>
<feature type="strand" evidence="12">
    <location>
        <begin position="2"/>
        <end position="6"/>
    </location>
</feature>
<feature type="turn" evidence="12">
    <location>
        <begin position="7"/>
        <end position="10"/>
    </location>
</feature>
<feature type="helix" evidence="12">
    <location>
        <begin position="12"/>
        <end position="21"/>
    </location>
</feature>
<feature type="strand" evidence="12">
    <location>
        <begin position="27"/>
        <end position="29"/>
    </location>
</feature>
<feature type="helix" evidence="12">
    <location>
        <begin position="37"/>
        <end position="46"/>
    </location>
</feature>
<feature type="strand" evidence="12">
    <location>
        <begin position="49"/>
        <end position="54"/>
    </location>
</feature>
<feature type="strand" evidence="11">
    <location>
        <begin position="58"/>
        <end position="60"/>
    </location>
</feature>
<feature type="helix" evidence="12">
    <location>
        <begin position="64"/>
        <end position="67"/>
    </location>
</feature>
<feature type="turn" evidence="12">
    <location>
        <begin position="68"/>
        <end position="71"/>
    </location>
</feature>
<feature type="strand" evidence="12">
    <location>
        <begin position="75"/>
        <end position="82"/>
    </location>
</feature>
<feature type="helix" evidence="12">
    <location>
        <begin position="87"/>
        <end position="93"/>
    </location>
</feature>
<feature type="strand" evidence="12">
    <location>
        <begin position="98"/>
        <end position="101"/>
    </location>
</feature>
<feature type="helix" evidence="12">
    <location>
        <begin position="106"/>
        <end position="117"/>
    </location>
</feature>
<feature type="helix" evidence="12">
    <location>
        <begin position="125"/>
        <end position="127"/>
    </location>
</feature>
<feature type="strand" evidence="12">
    <location>
        <begin position="128"/>
        <end position="130"/>
    </location>
</feature>
<feature type="helix" evidence="10">
    <location>
        <begin position="140"/>
        <end position="151"/>
    </location>
</feature>
<feature type="helix" evidence="10">
    <location>
        <begin position="155"/>
        <end position="161"/>
    </location>
</feature>
<feature type="helix" evidence="10">
    <location>
        <begin position="166"/>
        <end position="192"/>
    </location>
</feature>
<protein>
    <recommendedName>
        <fullName>Transcriptional regulatory protein DesR</fullName>
    </recommendedName>
</protein>
<gene>
    <name type="primary">desR</name>
    <name type="synonym">yocG</name>
    <name type="ordered locus">BSU19200</name>
</gene>
<name>DESR_BACSU</name>
<organism>
    <name type="scientific">Bacillus subtilis (strain 168)</name>
    <dbReference type="NCBI Taxonomy" id="224308"/>
    <lineage>
        <taxon>Bacteria</taxon>
        <taxon>Bacillati</taxon>
        <taxon>Bacillota</taxon>
        <taxon>Bacilli</taxon>
        <taxon>Bacillales</taxon>
        <taxon>Bacillaceae</taxon>
        <taxon>Bacillus</taxon>
    </lineage>
</organism>
<comment type="function">
    <text evidence="4 5 6 7 8">Member of the two-component regulatory system DesR/DesK, responsible for cold induction of the des gene coding for the Delta5 acyl-lipid desaturase.</text>
</comment>
<comment type="interaction">
    <interactant intactId="EBI-15806271">
        <id>O34723</id>
    </interactant>
    <interactant intactId="EBI-15806221">
        <id>O34757</id>
        <label>desK</label>
    </interactant>
    <organismsDiffer>false</organismsDiffer>
    <experiments>3</experiments>
</comment>
<comment type="subcellular location">
    <subcellularLocation>
        <location evidence="9">Cytoplasm</location>
    </subcellularLocation>
</comment>
<comment type="PTM">
    <text evidence="1">Phosphorylated by DesK.</text>
</comment>
<evidence type="ECO:0000250" key="1"/>
<evidence type="ECO:0000255" key="2">
    <source>
        <dbReference type="PROSITE-ProRule" id="PRU00169"/>
    </source>
</evidence>
<evidence type="ECO:0000255" key="3">
    <source>
        <dbReference type="PROSITE-ProRule" id="PRU00411"/>
    </source>
</evidence>
<evidence type="ECO:0000269" key="4">
    <source>
    </source>
</evidence>
<evidence type="ECO:0000269" key="5">
    <source>
    </source>
</evidence>
<evidence type="ECO:0000269" key="6">
    <source>
    </source>
</evidence>
<evidence type="ECO:0000269" key="7">
    <source>
    </source>
</evidence>
<evidence type="ECO:0000269" key="8">
    <source>
    </source>
</evidence>
<evidence type="ECO:0000305" key="9"/>
<evidence type="ECO:0007829" key="10">
    <source>
        <dbReference type="PDB" id="4LDZ"/>
    </source>
</evidence>
<evidence type="ECO:0007829" key="11">
    <source>
        <dbReference type="PDB" id="4LE0"/>
    </source>
</evidence>
<evidence type="ECO:0007829" key="12">
    <source>
        <dbReference type="PDB" id="4LE1"/>
    </source>
</evidence>
<reference key="1">
    <citation type="submission" date="1997-10" db="EMBL/GenBank/DDBJ databases">
        <title>Sequence analysis of the Bacillus subtilis chromosome region between the terC and odhAB loci cloned in a yeast artificial chromosome.</title>
        <authorList>
            <person name="Lapidus A."/>
            <person name="Galleron N."/>
            <person name="Sorokin A."/>
            <person name="Ehrlich S.D."/>
        </authorList>
    </citation>
    <scope>NUCLEOTIDE SEQUENCE [GENOMIC DNA]</scope>
    <source>
        <strain>168</strain>
    </source>
</reference>
<reference key="2">
    <citation type="journal article" date="1997" name="Nature">
        <title>The complete genome sequence of the Gram-positive bacterium Bacillus subtilis.</title>
        <authorList>
            <person name="Kunst F."/>
            <person name="Ogasawara N."/>
            <person name="Moszer I."/>
            <person name="Albertini A.M."/>
            <person name="Alloni G."/>
            <person name="Azevedo V."/>
            <person name="Bertero M.G."/>
            <person name="Bessieres P."/>
            <person name="Bolotin A."/>
            <person name="Borchert S."/>
            <person name="Borriss R."/>
            <person name="Boursier L."/>
            <person name="Brans A."/>
            <person name="Braun M."/>
            <person name="Brignell S.C."/>
            <person name="Bron S."/>
            <person name="Brouillet S."/>
            <person name="Bruschi C.V."/>
            <person name="Caldwell B."/>
            <person name="Capuano V."/>
            <person name="Carter N.M."/>
            <person name="Choi S.-K."/>
            <person name="Codani J.-J."/>
            <person name="Connerton I.F."/>
            <person name="Cummings N.J."/>
            <person name="Daniel R.A."/>
            <person name="Denizot F."/>
            <person name="Devine K.M."/>
            <person name="Duesterhoeft A."/>
            <person name="Ehrlich S.D."/>
            <person name="Emmerson P.T."/>
            <person name="Entian K.-D."/>
            <person name="Errington J."/>
            <person name="Fabret C."/>
            <person name="Ferrari E."/>
            <person name="Foulger D."/>
            <person name="Fritz C."/>
            <person name="Fujita M."/>
            <person name="Fujita Y."/>
            <person name="Fuma S."/>
            <person name="Galizzi A."/>
            <person name="Galleron N."/>
            <person name="Ghim S.-Y."/>
            <person name="Glaser P."/>
            <person name="Goffeau A."/>
            <person name="Golightly E.J."/>
            <person name="Grandi G."/>
            <person name="Guiseppi G."/>
            <person name="Guy B.J."/>
            <person name="Haga K."/>
            <person name="Haiech J."/>
            <person name="Harwood C.R."/>
            <person name="Henaut A."/>
            <person name="Hilbert H."/>
            <person name="Holsappel S."/>
            <person name="Hosono S."/>
            <person name="Hullo M.-F."/>
            <person name="Itaya M."/>
            <person name="Jones L.-M."/>
            <person name="Joris B."/>
            <person name="Karamata D."/>
            <person name="Kasahara Y."/>
            <person name="Klaerr-Blanchard M."/>
            <person name="Klein C."/>
            <person name="Kobayashi Y."/>
            <person name="Koetter P."/>
            <person name="Koningstein G."/>
            <person name="Krogh S."/>
            <person name="Kumano M."/>
            <person name="Kurita K."/>
            <person name="Lapidus A."/>
            <person name="Lardinois S."/>
            <person name="Lauber J."/>
            <person name="Lazarevic V."/>
            <person name="Lee S.-M."/>
            <person name="Levine A."/>
            <person name="Liu H."/>
            <person name="Masuda S."/>
            <person name="Mauel C."/>
            <person name="Medigue C."/>
            <person name="Medina N."/>
            <person name="Mellado R.P."/>
            <person name="Mizuno M."/>
            <person name="Moestl D."/>
            <person name="Nakai S."/>
            <person name="Noback M."/>
            <person name="Noone D."/>
            <person name="O'Reilly M."/>
            <person name="Ogawa K."/>
            <person name="Ogiwara A."/>
            <person name="Oudega B."/>
            <person name="Park S.-H."/>
            <person name="Parro V."/>
            <person name="Pohl T.M."/>
            <person name="Portetelle D."/>
            <person name="Porwollik S."/>
            <person name="Prescott A.M."/>
            <person name="Presecan E."/>
            <person name="Pujic P."/>
            <person name="Purnelle B."/>
            <person name="Rapoport G."/>
            <person name="Rey M."/>
            <person name="Reynolds S."/>
            <person name="Rieger M."/>
            <person name="Rivolta C."/>
            <person name="Rocha E."/>
            <person name="Roche B."/>
            <person name="Rose M."/>
            <person name="Sadaie Y."/>
            <person name="Sato T."/>
            <person name="Scanlan E."/>
            <person name="Schleich S."/>
            <person name="Schroeter R."/>
            <person name="Scoffone F."/>
            <person name="Sekiguchi J."/>
            <person name="Sekowska A."/>
            <person name="Seror S.J."/>
            <person name="Serror P."/>
            <person name="Shin B.-S."/>
            <person name="Soldo B."/>
            <person name="Sorokin A."/>
            <person name="Tacconi E."/>
            <person name="Takagi T."/>
            <person name="Takahashi H."/>
            <person name="Takemaru K."/>
            <person name="Takeuchi M."/>
            <person name="Tamakoshi A."/>
            <person name="Tanaka T."/>
            <person name="Terpstra P."/>
            <person name="Tognoni A."/>
            <person name="Tosato V."/>
            <person name="Uchiyama S."/>
            <person name="Vandenbol M."/>
            <person name="Vannier F."/>
            <person name="Vassarotti A."/>
            <person name="Viari A."/>
            <person name="Wambutt R."/>
            <person name="Wedler E."/>
            <person name="Wedler H."/>
            <person name="Weitzenegger T."/>
            <person name="Winters P."/>
            <person name="Wipat A."/>
            <person name="Yamamoto H."/>
            <person name="Yamane K."/>
            <person name="Yasumoto K."/>
            <person name="Yata K."/>
            <person name="Yoshida K."/>
            <person name="Yoshikawa H.-F."/>
            <person name="Zumstein E."/>
            <person name="Yoshikawa H."/>
            <person name="Danchin A."/>
        </authorList>
    </citation>
    <scope>NUCLEOTIDE SEQUENCE [LARGE SCALE GENOMIC DNA]</scope>
    <source>
        <strain>168</strain>
    </source>
</reference>
<reference key="3">
    <citation type="journal article" date="2001" name="EMBO J.">
        <title>Molecular basis of thermosensing: a two-component signal transduction thermometer in Bacillus subtilis.</title>
        <authorList>
            <person name="Aguilar P.S."/>
            <person name="Hernandez-Arriaga A.M."/>
            <person name="Cybulski L.E."/>
            <person name="Erazo A.C."/>
            <person name="de Mendoza D."/>
        </authorList>
    </citation>
    <scope>FUNCTION</scope>
</reference>
<reference key="4">
    <citation type="journal article" date="2001" name="J. Bacteriol.">
        <title>Comprehensive DNA microarray analysis of Bacillus subtilis two-component regulatory systems.</title>
        <authorList>
            <person name="Kobayashi K."/>
            <person name="Ogura M."/>
            <person name="Yamaguchi H."/>
            <person name="Yoshida K."/>
            <person name="Ogasawara N."/>
            <person name="Tanaka T."/>
            <person name="Fujita Y."/>
        </authorList>
    </citation>
    <scope>FUNCTION</scope>
    <scope>GENE NAME</scope>
</reference>
<reference key="5">
    <citation type="journal article" date="2002" name="Mol. Microbiol.">
        <title>Mechanism of membrane fluidity optimization: isothermal control of the Bacillus subtilis acyl-lipid desaturase.</title>
        <authorList>
            <person name="Cybulski L.E."/>
            <person name="Albanesi D."/>
            <person name="Mansilla M.C."/>
            <person name="Altabe S."/>
            <person name="Aguilar P.S."/>
            <person name="de Mendoza D."/>
        </authorList>
    </citation>
    <scope>FUNCTION</scope>
</reference>
<reference key="6">
    <citation type="journal article" date="2004" name="FEMS Microbiol. Lett.">
        <title>Genetic evidence for the temperature-sensing ability of the membrane domain of the Bacillus subtilis histidine kinase DesK.</title>
        <authorList>
            <person name="Hunger K."/>
            <person name="Beckering C.L."/>
            <person name="Marahiel M.A."/>
        </authorList>
    </citation>
    <scope>FUNCTION</scope>
</reference>
<reference key="7">
    <citation type="journal article" date="2004" name="J. Bacteriol.">
        <title>The membrane fluidity sensor DesK of Bacillus subtilis controls the signal decay of its cognate response regulator.</title>
        <authorList>
            <person name="Albanesi D."/>
            <person name="Mansilla M.C."/>
            <person name="de Mendoza D."/>
        </authorList>
    </citation>
    <scope>FUNCTION</scope>
</reference>
<reference key="8">
    <citation type="journal article" date="2005" name="Arch. Microbiol.">
        <title>The Bacillus subtilis desaturase: a model to understand phospholipid modification and temperature sensing.</title>
        <authorList>
            <person name="Mansilla M.C."/>
            <person name="de Mendoza D."/>
        </authorList>
    </citation>
    <scope>REVIEW</scope>
</reference>
<sequence length="199" mass="22177">MISIFIAEDQQMLLGALGSLLNLEDDMEVVGKGTTGQDAVDFVKKRQPDVCIMDIEMPGKTGLEAAEELKDTGCKIIILTTFARPGYFQRAIKAGVKGYLLKDSPSEELANAIRSVMNGKRIYAPELMEDLYSEANPLTDREKEVLELVADGKNTKEIAQELSIKSGTVRNYISMILEKLEVKNRIEAITRSKEKGWFK</sequence>